<reference key="1">
    <citation type="journal article" date="2004" name="Environ. Microbiol.">
        <title>The genome of Desulfotalea psychrophila, a sulfate-reducing bacterium from permanently cold Arctic sediments.</title>
        <authorList>
            <person name="Rabus R."/>
            <person name="Ruepp A."/>
            <person name="Frickey T."/>
            <person name="Rattei T."/>
            <person name="Fartmann B."/>
            <person name="Stark M."/>
            <person name="Bauer M."/>
            <person name="Zibat A."/>
            <person name="Lombardot T."/>
            <person name="Becker I."/>
            <person name="Amann J."/>
            <person name="Gellner K."/>
            <person name="Teeling H."/>
            <person name="Leuschner W.D."/>
            <person name="Gloeckner F.-O."/>
            <person name="Lupas A.N."/>
            <person name="Amann R."/>
            <person name="Klenk H.-P."/>
        </authorList>
    </citation>
    <scope>NUCLEOTIDE SEQUENCE [LARGE SCALE GENOMIC DNA]</scope>
    <source>
        <strain>DSM 12343 / LSv54</strain>
    </source>
</reference>
<name>TRUB_DESPS</name>
<comment type="function">
    <text evidence="1">Responsible for synthesis of pseudouridine from uracil-55 in the psi GC loop of transfer RNAs.</text>
</comment>
<comment type="catalytic activity">
    <reaction evidence="1">
        <text>uridine(55) in tRNA = pseudouridine(55) in tRNA</text>
        <dbReference type="Rhea" id="RHEA:42532"/>
        <dbReference type="Rhea" id="RHEA-COMP:10101"/>
        <dbReference type="Rhea" id="RHEA-COMP:10102"/>
        <dbReference type="ChEBI" id="CHEBI:65314"/>
        <dbReference type="ChEBI" id="CHEBI:65315"/>
        <dbReference type="EC" id="5.4.99.25"/>
    </reaction>
</comment>
<comment type="similarity">
    <text evidence="1">Belongs to the pseudouridine synthase TruB family. Type 1 subfamily.</text>
</comment>
<dbReference type="EC" id="5.4.99.25" evidence="1"/>
<dbReference type="EMBL" id="CR522870">
    <property type="protein sequence ID" value="CAG37339.1"/>
    <property type="molecule type" value="Genomic_DNA"/>
</dbReference>
<dbReference type="RefSeq" id="WP_011189851.1">
    <property type="nucleotide sequence ID" value="NC_006138.1"/>
</dbReference>
<dbReference type="SMR" id="Q6AJY7"/>
<dbReference type="STRING" id="177439.DP2610"/>
<dbReference type="KEGG" id="dps:DP2610"/>
<dbReference type="eggNOG" id="COG0130">
    <property type="taxonomic scope" value="Bacteria"/>
</dbReference>
<dbReference type="HOGENOM" id="CLU_032087_2_0_7"/>
<dbReference type="OrthoDB" id="9802309at2"/>
<dbReference type="Proteomes" id="UP000000602">
    <property type="component" value="Chromosome"/>
</dbReference>
<dbReference type="GO" id="GO:0003723">
    <property type="term" value="F:RNA binding"/>
    <property type="evidence" value="ECO:0007669"/>
    <property type="project" value="InterPro"/>
</dbReference>
<dbReference type="GO" id="GO:0160148">
    <property type="term" value="F:tRNA pseudouridine(55) synthase activity"/>
    <property type="evidence" value="ECO:0007669"/>
    <property type="project" value="UniProtKB-EC"/>
</dbReference>
<dbReference type="GO" id="GO:1990481">
    <property type="term" value="P:mRNA pseudouridine synthesis"/>
    <property type="evidence" value="ECO:0007669"/>
    <property type="project" value="TreeGrafter"/>
</dbReference>
<dbReference type="GO" id="GO:0031119">
    <property type="term" value="P:tRNA pseudouridine synthesis"/>
    <property type="evidence" value="ECO:0007669"/>
    <property type="project" value="UniProtKB-UniRule"/>
</dbReference>
<dbReference type="CDD" id="cd02573">
    <property type="entry name" value="PseudoU_synth_EcTruB"/>
    <property type="match status" value="1"/>
</dbReference>
<dbReference type="Gene3D" id="3.30.2350.10">
    <property type="entry name" value="Pseudouridine synthase"/>
    <property type="match status" value="1"/>
</dbReference>
<dbReference type="HAMAP" id="MF_01080">
    <property type="entry name" value="TruB_bact"/>
    <property type="match status" value="1"/>
</dbReference>
<dbReference type="InterPro" id="IPR020103">
    <property type="entry name" value="PsdUridine_synth_cat_dom_sf"/>
</dbReference>
<dbReference type="InterPro" id="IPR002501">
    <property type="entry name" value="PsdUridine_synth_N"/>
</dbReference>
<dbReference type="InterPro" id="IPR014780">
    <property type="entry name" value="tRNA_psdUridine_synth_TruB"/>
</dbReference>
<dbReference type="InterPro" id="IPR032819">
    <property type="entry name" value="TruB_C"/>
</dbReference>
<dbReference type="NCBIfam" id="TIGR00431">
    <property type="entry name" value="TruB"/>
    <property type="match status" value="1"/>
</dbReference>
<dbReference type="PANTHER" id="PTHR13767:SF2">
    <property type="entry name" value="PSEUDOURIDYLATE SYNTHASE TRUB1"/>
    <property type="match status" value="1"/>
</dbReference>
<dbReference type="PANTHER" id="PTHR13767">
    <property type="entry name" value="TRNA-PSEUDOURIDINE SYNTHASE"/>
    <property type="match status" value="1"/>
</dbReference>
<dbReference type="Pfam" id="PF16198">
    <property type="entry name" value="TruB_C_2"/>
    <property type="match status" value="1"/>
</dbReference>
<dbReference type="Pfam" id="PF01509">
    <property type="entry name" value="TruB_N"/>
    <property type="match status" value="1"/>
</dbReference>
<dbReference type="SUPFAM" id="SSF55120">
    <property type="entry name" value="Pseudouridine synthase"/>
    <property type="match status" value="1"/>
</dbReference>
<evidence type="ECO:0000255" key="1">
    <source>
        <dbReference type="HAMAP-Rule" id="MF_01080"/>
    </source>
</evidence>
<organism>
    <name type="scientific">Desulfotalea psychrophila (strain LSv54 / DSM 12343)</name>
    <dbReference type="NCBI Taxonomy" id="177439"/>
    <lineage>
        <taxon>Bacteria</taxon>
        <taxon>Pseudomonadati</taxon>
        <taxon>Thermodesulfobacteriota</taxon>
        <taxon>Desulfobulbia</taxon>
        <taxon>Desulfobulbales</taxon>
        <taxon>Desulfocapsaceae</taxon>
        <taxon>Desulfotalea</taxon>
    </lineage>
</organism>
<gene>
    <name evidence="1" type="primary">truB</name>
    <name type="ordered locus">DP2610</name>
</gene>
<proteinExistence type="inferred from homology"/>
<protein>
    <recommendedName>
        <fullName evidence="1">tRNA pseudouridine synthase B</fullName>
        <ecNumber evidence="1">5.4.99.25</ecNumber>
    </recommendedName>
    <alternativeName>
        <fullName evidence="1">tRNA pseudouridine(55) synthase</fullName>
        <shortName evidence="1">Psi55 synthase</shortName>
    </alternativeName>
    <alternativeName>
        <fullName evidence="1">tRNA pseudouridylate synthase</fullName>
    </alternativeName>
    <alternativeName>
        <fullName evidence="1">tRNA-uridine isomerase</fullName>
    </alternativeName>
</protein>
<feature type="chain" id="PRO_0000121828" description="tRNA pseudouridine synthase B">
    <location>
        <begin position="1"/>
        <end position="246"/>
    </location>
</feature>
<feature type="active site" description="Nucleophile" evidence="1">
    <location>
        <position position="44"/>
    </location>
</feature>
<accession>Q6AJY7</accession>
<keyword id="KW-0413">Isomerase</keyword>
<keyword id="KW-1185">Reference proteome</keyword>
<keyword id="KW-0819">tRNA processing</keyword>
<sequence>MEEQDFTAGIFLIDKPVGITSFGVVSRVRRILGMKKVGHAGTLDPFATGLLVVCAGRPATKMISSFMDGEKEYIATLCLGVETETQDPEGAEIARKQVGFLHAETIETCLAGFKGTQMQVPPAYSALKHQGKPLYYYARKGIEVKKDAREITVHEIERLGEGDLEGDHPSLVIRVRCSKGSYIRTLGSDIGKVLGCGAHLTDLRRTKSGFFNVEDALTDVDMLAEDAHERFMKKVLSVESVGKLLQ</sequence>